<feature type="chain" id="PRO_0000223385" description="Bifunctional AAC/APH">
    <location>
        <begin position="1"/>
        <end position="479"/>
    </location>
</feature>
<feature type="domain" description="N-acetyltransferase" evidence="3">
    <location>
        <begin position="8"/>
        <end position="180"/>
    </location>
</feature>
<feature type="region of interest" description="Acetyl-CoA binding site" evidence="1">
    <location>
        <begin position="110"/>
        <end position="153"/>
    </location>
</feature>
<feature type="active site" description="Proton acceptor; for phosphotransferase activity" evidence="1">
    <location>
        <position position="374"/>
    </location>
</feature>
<feature type="binding site" evidence="1">
    <location>
        <position position="393"/>
    </location>
    <ligand>
        <name>a gentamycin</name>
        <dbReference type="ChEBI" id="CHEBI:90218"/>
    </ligand>
</feature>
<feature type="sequence variant" description="In plasmid pGTK3.">
    <original>N</original>
    <variation>I</variation>
    <location>
        <position position="182"/>
    </location>
</feature>
<feature type="strand" evidence="5">
    <location>
        <begin position="2"/>
        <end position="5"/>
    </location>
</feature>
<feature type="strand" evidence="5">
    <location>
        <begin position="8"/>
        <end position="12"/>
    </location>
</feature>
<feature type="helix" evidence="5">
    <location>
        <begin position="15"/>
        <end position="17"/>
    </location>
</feature>
<feature type="helix" evidence="5">
    <location>
        <begin position="18"/>
        <end position="24"/>
    </location>
</feature>
<feature type="helix" evidence="5">
    <location>
        <begin position="28"/>
        <end position="31"/>
    </location>
</feature>
<feature type="turn" evidence="5">
    <location>
        <begin position="32"/>
        <end position="35"/>
    </location>
</feature>
<feature type="helix" evidence="5">
    <location>
        <begin position="43"/>
        <end position="49"/>
    </location>
</feature>
<feature type="strand" evidence="5">
    <location>
        <begin position="58"/>
        <end position="65"/>
    </location>
</feature>
<feature type="strand" evidence="5">
    <location>
        <begin position="68"/>
        <end position="77"/>
    </location>
</feature>
<feature type="helix" evidence="5">
    <location>
        <begin position="80"/>
        <end position="86"/>
    </location>
</feature>
<feature type="strand" evidence="5">
    <location>
        <begin position="95"/>
        <end position="103"/>
    </location>
</feature>
<feature type="helix" evidence="5">
    <location>
        <begin position="105"/>
        <end position="107"/>
    </location>
</feature>
<feature type="strand" evidence="5">
    <location>
        <begin position="108"/>
        <end position="111"/>
    </location>
</feature>
<feature type="helix" evidence="5">
    <location>
        <begin position="112"/>
        <end position="128"/>
    </location>
</feature>
<feature type="strand" evidence="5">
    <location>
        <begin position="132"/>
        <end position="135"/>
    </location>
</feature>
<feature type="helix" evidence="5">
    <location>
        <begin position="142"/>
        <end position="151"/>
    </location>
</feature>
<feature type="strand" evidence="5">
    <location>
        <begin position="154"/>
        <end position="165"/>
    </location>
</feature>
<feature type="strand" evidence="5">
    <location>
        <begin position="168"/>
        <end position="177"/>
    </location>
</feature>
<protein>
    <recommendedName>
        <fullName>Bifunctional AAC/APH</fullName>
    </recommendedName>
    <domain>
        <recommendedName>
            <fullName>6'-aminoglycoside N-acetyltransferase</fullName>
            <ecNumber>2.3.1.-</ecNumber>
        </recommendedName>
        <alternativeName>
            <fullName>AAC(6')</fullName>
        </alternativeName>
    </domain>
    <domain>
        <recommendedName>
            <fullName>Aminoglycoside 2''-phosphotransferase</fullName>
        </recommendedName>
        <alternativeName>
            <fullName>2''-aminoglycoside phosphotransferase</fullName>
            <ecNumber evidence="2">2.7.1.190</ecNumber>
        </alternativeName>
        <alternativeName>
            <fullName>APH(2'')</fullName>
        </alternativeName>
    </domain>
</protein>
<comment type="function">
    <text evidence="2">Involved in resistance to gentamicin, tobramycin, and kanamycin. Tobramycin and kanamycin resistance is due to the ACC activity, specified by N-terminal region. The C-terminal region is a kinase that phosphorylates several 4,6-disubstituted aminoglycosides.</text>
</comment>
<comment type="catalytic activity">
    <reaction evidence="2">
        <text>a gentamycin + GTP = a gentamycin 2''-phosphate + GDP + H(+)</text>
        <dbReference type="Rhea" id="RHEA:48872"/>
        <dbReference type="ChEBI" id="CHEBI:15378"/>
        <dbReference type="ChEBI" id="CHEBI:37565"/>
        <dbReference type="ChEBI" id="CHEBI:58189"/>
        <dbReference type="ChEBI" id="CHEBI:90218"/>
        <dbReference type="ChEBI" id="CHEBI:90219"/>
        <dbReference type="EC" id="2.7.1.190"/>
    </reaction>
</comment>
<comment type="subcellular location">
    <subcellularLocation>
        <location evidence="1">Cytoplasm</location>
    </subcellularLocation>
</comment>
<comment type="similarity">
    <text evidence="4">In the C-terminal section; belongs to the aminoglycoside phosphotransferase family.</text>
</comment>
<organism>
    <name type="scientific">Staphylococcus warneri</name>
    <dbReference type="NCBI Taxonomy" id="1292"/>
    <lineage>
        <taxon>Bacteria</taxon>
        <taxon>Bacillati</taxon>
        <taxon>Bacillota</taxon>
        <taxon>Bacilli</taxon>
        <taxon>Bacillales</taxon>
        <taxon>Staphylococcaceae</taxon>
        <taxon>Staphylococcus</taxon>
    </lineage>
</organism>
<accession>Q7ATH7</accession>
<accession>Q7WTC3</accession>
<proteinExistence type="evidence at protein level"/>
<geneLocation type="plasmid">
    <name>pGTK1</name>
</geneLocation>
<geneLocation type="plasmid">
    <name>pGTK3</name>
</geneLocation>
<evidence type="ECO:0000250" key="1"/>
<evidence type="ECO:0000250" key="2">
    <source>
        <dbReference type="UniProtKB" id="P0A0C2"/>
    </source>
</evidence>
<evidence type="ECO:0000255" key="3">
    <source>
        <dbReference type="PROSITE-ProRule" id="PRU00532"/>
    </source>
</evidence>
<evidence type="ECO:0000305" key="4"/>
<evidence type="ECO:0007829" key="5">
    <source>
        <dbReference type="PDB" id="4QC6"/>
    </source>
</evidence>
<sequence length="479" mass="56855">MNIVENEICIRTLIDDDFPLMLKWLTDERVLEFYGGRDKKYTLESLKKHYTEPWEDEVFRVIIEYNNVPIGYGQIYKMYDELYTDYHYPKTDEIVYGMDQFIGEPNYWSKGIGTRYIKLIFEFLKKERNANAVILDPHKNNPRAIRAYQKSGFRIIEDLPEHELHEGKKEDCYLMEYRYDDNATNVKAMKYLIEHYFDNFKVDSIEIIGSGYDSVAYLVNNEYIFKTKFSTNKKKGYAKEKAIYNFLNTNLETNVKIPNIEYSYISDELSILGYKEIKGTFLTPEIYSTMSEEEQNLLKRDIASFLRQMHGLDYTDISECTIDNKQNVLEEYILLRETIYNDLTDIEKDYIESFMERLNATTVFEGKKCLCHNDFSCNHLLLDGNNRLTGIIDFGDSGIIDEYCDFIYLLEDSEEEIGTNFGEDILRMYGNIDIEKAKEYQDIVEEYYPIETIVYGIKNIKQEFIENGRKEIYKRTYKD</sequence>
<keyword id="KW-0002">3D-structure</keyword>
<keyword id="KW-0012">Acyltransferase</keyword>
<keyword id="KW-0046">Antibiotic resistance</keyword>
<keyword id="KW-0067">ATP-binding</keyword>
<keyword id="KW-0963">Cytoplasm</keyword>
<keyword id="KW-0418">Kinase</keyword>
<keyword id="KW-0511">Multifunctional enzyme</keyword>
<keyword id="KW-0547">Nucleotide-binding</keyword>
<keyword id="KW-0614">Plasmid</keyword>
<keyword id="KW-0808">Transferase</keyword>
<reference key="1">
    <citation type="journal article" date="2003" name="J. Antimicrob. Chemother.">
        <title>Molecular analysis of the plasmid-borne aacA/aphD resistance gene region of coagulase-negative staphylococci from chickens.</title>
        <authorList>
            <person name="Lange C.C."/>
            <person name="Werckenthin C."/>
            <person name="Schwarz S."/>
        </authorList>
    </citation>
    <scope>NUCLEOTIDE SEQUENCE [GENOMIC DNA]</scope>
</reference>
<dbReference type="EC" id="2.3.1.-"/>
<dbReference type="EC" id="2.7.1.190" evidence="2"/>
<dbReference type="EMBL" id="AJ536195">
    <property type="protein sequence ID" value="CAD60196.1"/>
    <property type="molecule type" value="Genomic_DNA"/>
</dbReference>
<dbReference type="EMBL" id="AJ536196">
    <property type="protein sequence ID" value="CAD60199.1"/>
    <property type="molecule type" value="Genomic_DNA"/>
</dbReference>
<dbReference type="RefSeq" id="WP_032490744.1">
    <property type="nucleotide sequence ID" value="NG_047212.1"/>
</dbReference>
<dbReference type="PDB" id="4QC6">
    <property type="method" value="X-ray"/>
    <property type="resolution" value="1.30 A"/>
    <property type="chains" value="A/B=1-179"/>
</dbReference>
<dbReference type="PDBsum" id="4QC6"/>
<dbReference type="SMR" id="Q7ATH7"/>
<dbReference type="CARD" id="ARO:3002597">
    <property type="molecule name" value="AAC6_Ie_APH2_Ia"/>
    <property type="mechanism identifier" value="ARO:0001004"/>
    <property type="mechanism name" value="antibiotic inactivation"/>
</dbReference>
<dbReference type="BRENDA" id="2.3.1.82">
    <property type="organism ID" value="5885"/>
</dbReference>
<dbReference type="EvolutionaryTrace" id="Q7ATH7"/>
<dbReference type="GO" id="GO:0005737">
    <property type="term" value="C:cytoplasm"/>
    <property type="evidence" value="ECO:0007669"/>
    <property type="project" value="UniProtKB-SubCell"/>
</dbReference>
<dbReference type="GO" id="GO:0034071">
    <property type="term" value="F:aminoglycoside phosphotransferase activity"/>
    <property type="evidence" value="ECO:0007669"/>
    <property type="project" value="UniProtKB-EC"/>
</dbReference>
<dbReference type="GO" id="GO:0005524">
    <property type="term" value="F:ATP binding"/>
    <property type="evidence" value="ECO:0007669"/>
    <property type="project" value="UniProtKB-KW"/>
</dbReference>
<dbReference type="GO" id="GO:0016410">
    <property type="term" value="F:N-acyltransferase activity"/>
    <property type="evidence" value="ECO:0007669"/>
    <property type="project" value="TreeGrafter"/>
</dbReference>
<dbReference type="GO" id="GO:0046677">
    <property type="term" value="P:response to antibiotic"/>
    <property type="evidence" value="ECO:0007669"/>
    <property type="project" value="UniProtKB-KW"/>
</dbReference>
<dbReference type="CDD" id="cd05120">
    <property type="entry name" value="APH_ChoK_like"/>
    <property type="match status" value="1"/>
</dbReference>
<dbReference type="Gene3D" id="3.40.630.30">
    <property type="match status" value="1"/>
</dbReference>
<dbReference type="Gene3D" id="3.90.1200.10">
    <property type="match status" value="1"/>
</dbReference>
<dbReference type="Gene3D" id="3.30.200.20">
    <property type="entry name" value="Phosphorylase Kinase, domain 1"/>
    <property type="match status" value="1"/>
</dbReference>
<dbReference type="InterPro" id="IPR016181">
    <property type="entry name" value="Acyl_CoA_acyltransferase"/>
</dbReference>
<dbReference type="InterPro" id="IPR002575">
    <property type="entry name" value="Aminoglycoside_PTrfase"/>
</dbReference>
<dbReference type="InterPro" id="IPR000182">
    <property type="entry name" value="GNAT_dom"/>
</dbReference>
<dbReference type="InterPro" id="IPR011009">
    <property type="entry name" value="Kinase-like_dom_sf"/>
</dbReference>
<dbReference type="NCBIfam" id="NF000507">
    <property type="entry name" value="AAC_6p_Ie"/>
    <property type="match status" value="1"/>
</dbReference>
<dbReference type="NCBIfam" id="NF033693">
    <property type="entry name" value="AAC_6p_Ie_fam"/>
    <property type="match status" value="1"/>
</dbReference>
<dbReference type="NCBIfam" id="NF033692">
    <property type="entry name" value="APH_2pp_I_a_f_h"/>
    <property type="match status" value="1"/>
</dbReference>
<dbReference type="NCBIfam" id="NF000508">
    <property type="entry name" value="APH_2pp_Ia"/>
    <property type="match status" value="1"/>
</dbReference>
<dbReference type="PANTHER" id="PTHR31438">
    <property type="entry name" value="LYSINE N-ACYLTRANSFERASE C17G9.06C-RELATED"/>
    <property type="match status" value="1"/>
</dbReference>
<dbReference type="PANTHER" id="PTHR31438:SF1">
    <property type="entry name" value="LYSINE N-ACYLTRANSFERASE C17G9.06C-RELATED"/>
    <property type="match status" value="1"/>
</dbReference>
<dbReference type="Pfam" id="PF13523">
    <property type="entry name" value="Acetyltransf_8"/>
    <property type="match status" value="1"/>
</dbReference>
<dbReference type="Pfam" id="PF01636">
    <property type="entry name" value="APH"/>
    <property type="match status" value="1"/>
</dbReference>
<dbReference type="SUPFAM" id="SSF55729">
    <property type="entry name" value="Acyl-CoA N-acyltransferases (Nat)"/>
    <property type="match status" value="1"/>
</dbReference>
<dbReference type="SUPFAM" id="SSF56112">
    <property type="entry name" value="Protein kinase-like (PK-like)"/>
    <property type="match status" value="1"/>
</dbReference>
<dbReference type="PROSITE" id="PS51186">
    <property type="entry name" value="GNAT"/>
    <property type="match status" value="1"/>
</dbReference>
<gene>
    <name type="primary">aacA-aphD</name>
</gene>
<name>AACA_STAWA</name>